<comment type="function">
    <text evidence="1">Binds 16S rRNA, required for the assembly of 30S particles and may also be responsible for determining the conformation of the 16S rRNA at the A site.</text>
</comment>
<comment type="subunit">
    <text evidence="1">Part of the 30S ribosomal subunit. Contacts proteins S3 and S10.</text>
</comment>
<comment type="similarity">
    <text evidence="1">Belongs to the universal ribosomal protein uS14 family.</text>
</comment>
<feature type="chain" id="PRO_1000128432" description="Small ribosomal subunit protein uS14">
    <location>
        <begin position="1"/>
        <end position="89"/>
    </location>
</feature>
<evidence type="ECO:0000255" key="1">
    <source>
        <dbReference type="HAMAP-Rule" id="MF_00537"/>
    </source>
</evidence>
<evidence type="ECO:0000305" key="2"/>
<gene>
    <name evidence="1" type="primary">rpsN</name>
    <name type="ordered locus">LCA_0266</name>
</gene>
<organism>
    <name type="scientific">Latilactobacillus sakei subsp. sakei (strain 23K)</name>
    <name type="common">Lactobacillus sakei subsp. sakei</name>
    <dbReference type="NCBI Taxonomy" id="314315"/>
    <lineage>
        <taxon>Bacteria</taxon>
        <taxon>Bacillati</taxon>
        <taxon>Bacillota</taxon>
        <taxon>Bacilli</taxon>
        <taxon>Lactobacillales</taxon>
        <taxon>Lactobacillaceae</taxon>
        <taxon>Latilactobacillus</taxon>
    </lineage>
</organism>
<dbReference type="EMBL" id="CR936503">
    <property type="protein sequence ID" value="CAI54568.1"/>
    <property type="molecule type" value="Genomic_DNA"/>
</dbReference>
<dbReference type="RefSeq" id="WP_011373976.1">
    <property type="nucleotide sequence ID" value="NC_007576.1"/>
</dbReference>
<dbReference type="SMR" id="Q38Z09"/>
<dbReference type="STRING" id="314315.LCA_0266"/>
<dbReference type="GeneID" id="57133098"/>
<dbReference type="KEGG" id="lsa:LCA_0266"/>
<dbReference type="eggNOG" id="COG0199">
    <property type="taxonomic scope" value="Bacteria"/>
</dbReference>
<dbReference type="HOGENOM" id="CLU_139869_0_0_9"/>
<dbReference type="OrthoDB" id="9810484at2"/>
<dbReference type="Proteomes" id="UP000002707">
    <property type="component" value="Chromosome"/>
</dbReference>
<dbReference type="GO" id="GO:0005737">
    <property type="term" value="C:cytoplasm"/>
    <property type="evidence" value="ECO:0007669"/>
    <property type="project" value="UniProtKB-ARBA"/>
</dbReference>
<dbReference type="GO" id="GO:0015935">
    <property type="term" value="C:small ribosomal subunit"/>
    <property type="evidence" value="ECO:0007669"/>
    <property type="project" value="TreeGrafter"/>
</dbReference>
<dbReference type="GO" id="GO:0019843">
    <property type="term" value="F:rRNA binding"/>
    <property type="evidence" value="ECO:0007669"/>
    <property type="project" value="UniProtKB-UniRule"/>
</dbReference>
<dbReference type="GO" id="GO:0003735">
    <property type="term" value="F:structural constituent of ribosome"/>
    <property type="evidence" value="ECO:0007669"/>
    <property type="project" value="InterPro"/>
</dbReference>
<dbReference type="GO" id="GO:0006412">
    <property type="term" value="P:translation"/>
    <property type="evidence" value="ECO:0007669"/>
    <property type="project" value="UniProtKB-UniRule"/>
</dbReference>
<dbReference type="Gene3D" id="4.10.830.10">
    <property type="entry name" value="30s Ribosomal Protein S14, Chain N"/>
    <property type="match status" value="1"/>
</dbReference>
<dbReference type="HAMAP" id="MF_00537">
    <property type="entry name" value="Ribosomal_uS14_1"/>
    <property type="match status" value="1"/>
</dbReference>
<dbReference type="InterPro" id="IPR001209">
    <property type="entry name" value="Ribosomal_uS14"/>
</dbReference>
<dbReference type="InterPro" id="IPR023036">
    <property type="entry name" value="Ribosomal_uS14_bac/plastid"/>
</dbReference>
<dbReference type="InterPro" id="IPR043140">
    <property type="entry name" value="Ribosomal_uS14_sf"/>
</dbReference>
<dbReference type="NCBIfam" id="NF006477">
    <property type="entry name" value="PRK08881.1"/>
    <property type="match status" value="1"/>
</dbReference>
<dbReference type="PANTHER" id="PTHR19836">
    <property type="entry name" value="30S RIBOSOMAL PROTEIN S14"/>
    <property type="match status" value="1"/>
</dbReference>
<dbReference type="PANTHER" id="PTHR19836:SF19">
    <property type="entry name" value="SMALL RIBOSOMAL SUBUNIT PROTEIN US14M"/>
    <property type="match status" value="1"/>
</dbReference>
<dbReference type="Pfam" id="PF00253">
    <property type="entry name" value="Ribosomal_S14"/>
    <property type="match status" value="1"/>
</dbReference>
<dbReference type="SUPFAM" id="SSF57716">
    <property type="entry name" value="Glucocorticoid receptor-like (DNA-binding domain)"/>
    <property type="match status" value="1"/>
</dbReference>
<keyword id="KW-1185">Reference proteome</keyword>
<keyword id="KW-0687">Ribonucleoprotein</keyword>
<keyword id="KW-0689">Ribosomal protein</keyword>
<keyword id="KW-0694">RNA-binding</keyword>
<keyword id="KW-0699">rRNA-binding</keyword>
<accession>Q38Z09</accession>
<sequence length="89" mass="10039">MAKKSKIAKLAKQRALVAKYADLRATLKAEGNYAALAELPKDSSPVRLRNRDLIDGRPRSFMRKFGMSRINFRELAHKGQIPGVKKASW</sequence>
<protein>
    <recommendedName>
        <fullName evidence="1">Small ribosomal subunit protein uS14</fullName>
    </recommendedName>
    <alternativeName>
        <fullName evidence="2">30S ribosomal protein S14</fullName>
    </alternativeName>
</protein>
<proteinExistence type="inferred from homology"/>
<name>RS14_LATSS</name>
<reference key="1">
    <citation type="journal article" date="2005" name="Nat. Biotechnol.">
        <title>The complete genome sequence of the meat-borne lactic acid bacterium Lactobacillus sakei 23K.</title>
        <authorList>
            <person name="Chaillou S."/>
            <person name="Champomier-Verges M.-C."/>
            <person name="Cornet M."/>
            <person name="Crutz-Le Coq A.-M."/>
            <person name="Dudez A.-M."/>
            <person name="Martin V."/>
            <person name="Beaufils S."/>
            <person name="Darbon-Rongere E."/>
            <person name="Bossy R."/>
            <person name="Loux V."/>
            <person name="Zagorec M."/>
        </authorList>
    </citation>
    <scope>NUCLEOTIDE SEQUENCE [LARGE SCALE GENOMIC DNA]</scope>
    <source>
        <strain>23K</strain>
    </source>
</reference>